<organism>
    <name type="scientific">Homo sapiens</name>
    <name type="common">Human</name>
    <dbReference type="NCBI Taxonomy" id="9606"/>
    <lineage>
        <taxon>Eukaryota</taxon>
        <taxon>Metazoa</taxon>
        <taxon>Chordata</taxon>
        <taxon>Craniata</taxon>
        <taxon>Vertebrata</taxon>
        <taxon>Euteleostomi</taxon>
        <taxon>Mammalia</taxon>
        <taxon>Eutheria</taxon>
        <taxon>Euarchontoglires</taxon>
        <taxon>Primates</taxon>
        <taxon>Haplorrhini</taxon>
        <taxon>Catarrhini</taxon>
        <taxon>Hominidae</taxon>
        <taxon>Homo</taxon>
    </lineage>
</organism>
<name>DNHD1_HUMAN</name>
<protein>
    <recommendedName>
        <fullName evidence="6">Dynein heavy chain domain-containing protein 1</fullName>
    </recommendedName>
    <alternativeName>
        <fullName>Coiled-coil domain-containing protein 35</fullName>
    </alternativeName>
    <alternativeName>
        <fullName>Dynein heavy chain domain 1-like protein</fullName>
    </alternativeName>
</protein>
<reference key="1">
    <citation type="journal article" date="2004" name="Nat. Genet.">
        <title>Complete sequencing and characterization of 21,243 full-length human cDNAs.</title>
        <authorList>
            <person name="Ota T."/>
            <person name="Suzuki Y."/>
            <person name="Nishikawa T."/>
            <person name="Otsuki T."/>
            <person name="Sugiyama T."/>
            <person name="Irie R."/>
            <person name="Wakamatsu A."/>
            <person name="Hayashi K."/>
            <person name="Sato H."/>
            <person name="Nagai K."/>
            <person name="Kimura K."/>
            <person name="Makita H."/>
            <person name="Sekine M."/>
            <person name="Obayashi M."/>
            <person name="Nishi T."/>
            <person name="Shibahara T."/>
            <person name="Tanaka T."/>
            <person name="Ishii S."/>
            <person name="Yamamoto J."/>
            <person name="Saito K."/>
            <person name="Kawai Y."/>
            <person name="Isono Y."/>
            <person name="Nakamura Y."/>
            <person name="Nagahari K."/>
            <person name="Murakami K."/>
            <person name="Yasuda T."/>
            <person name="Iwayanagi T."/>
            <person name="Wagatsuma M."/>
            <person name="Shiratori A."/>
            <person name="Sudo H."/>
            <person name="Hosoiri T."/>
            <person name="Kaku Y."/>
            <person name="Kodaira H."/>
            <person name="Kondo H."/>
            <person name="Sugawara M."/>
            <person name="Takahashi M."/>
            <person name="Kanda K."/>
            <person name="Yokoi T."/>
            <person name="Furuya T."/>
            <person name="Kikkawa E."/>
            <person name="Omura Y."/>
            <person name="Abe K."/>
            <person name="Kamihara K."/>
            <person name="Katsuta N."/>
            <person name="Sato K."/>
            <person name="Tanikawa M."/>
            <person name="Yamazaki M."/>
            <person name="Ninomiya K."/>
            <person name="Ishibashi T."/>
            <person name="Yamashita H."/>
            <person name="Murakawa K."/>
            <person name="Fujimori K."/>
            <person name="Tanai H."/>
            <person name="Kimata M."/>
            <person name="Watanabe M."/>
            <person name="Hiraoka S."/>
            <person name="Chiba Y."/>
            <person name="Ishida S."/>
            <person name="Ono Y."/>
            <person name="Takiguchi S."/>
            <person name="Watanabe S."/>
            <person name="Yosida M."/>
            <person name="Hotuta T."/>
            <person name="Kusano J."/>
            <person name="Kanehori K."/>
            <person name="Takahashi-Fujii A."/>
            <person name="Hara H."/>
            <person name="Tanase T.-O."/>
            <person name="Nomura Y."/>
            <person name="Togiya S."/>
            <person name="Komai F."/>
            <person name="Hara R."/>
            <person name="Takeuchi K."/>
            <person name="Arita M."/>
            <person name="Imose N."/>
            <person name="Musashino K."/>
            <person name="Yuuki H."/>
            <person name="Oshima A."/>
            <person name="Sasaki N."/>
            <person name="Aotsuka S."/>
            <person name="Yoshikawa Y."/>
            <person name="Matsunawa H."/>
            <person name="Ichihara T."/>
            <person name="Shiohata N."/>
            <person name="Sano S."/>
            <person name="Moriya S."/>
            <person name="Momiyama H."/>
            <person name="Satoh N."/>
            <person name="Takami S."/>
            <person name="Terashima Y."/>
            <person name="Suzuki O."/>
            <person name="Nakagawa S."/>
            <person name="Senoh A."/>
            <person name="Mizoguchi H."/>
            <person name="Goto Y."/>
            <person name="Shimizu F."/>
            <person name="Wakebe H."/>
            <person name="Hishigaki H."/>
            <person name="Watanabe T."/>
            <person name="Sugiyama A."/>
            <person name="Takemoto M."/>
            <person name="Kawakami B."/>
            <person name="Yamazaki M."/>
            <person name="Watanabe K."/>
            <person name="Kumagai A."/>
            <person name="Itakura S."/>
            <person name="Fukuzumi Y."/>
            <person name="Fujimori Y."/>
            <person name="Komiyama M."/>
            <person name="Tashiro H."/>
            <person name="Tanigami A."/>
            <person name="Fujiwara T."/>
            <person name="Ono T."/>
            <person name="Yamada K."/>
            <person name="Fujii Y."/>
            <person name="Ozaki K."/>
            <person name="Hirao M."/>
            <person name="Ohmori Y."/>
            <person name="Kawabata A."/>
            <person name="Hikiji T."/>
            <person name="Kobatake N."/>
            <person name="Inagaki H."/>
            <person name="Ikema Y."/>
            <person name="Okamoto S."/>
            <person name="Okitani R."/>
            <person name="Kawakami T."/>
            <person name="Noguchi S."/>
            <person name="Itoh T."/>
            <person name="Shigeta K."/>
            <person name="Senba T."/>
            <person name="Matsumura K."/>
            <person name="Nakajima Y."/>
            <person name="Mizuno T."/>
            <person name="Morinaga M."/>
            <person name="Sasaki M."/>
            <person name="Togashi T."/>
            <person name="Oyama M."/>
            <person name="Hata H."/>
            <person name="Watanabe M."/>
            <person name="Komatsu T."/>
            <person name="Mizushima-Sugano J."/>
            <person name="Satoh T."/>
            <person name="Shirai Y."/>
            <person name="Takahashi Y."/>
            <person name="Nakagawa K."/>
            <person name="Okumura K."/>
            <person name="Nagase T."/>
            <person name="Nomura N."/>
            <person name="Kikuchi H."/>
            <person name="Masuho Y."/>
            <person name="Yamashita R."/>
            <person name="Nakai K."/>
            <person name="Yada T."/>
            <person name="Nakamura Y."/>
            <person name="Ohara O."/>
            <person name="Isogai T."/>
            <person name="Sugano S."/>
        </authorList>
    </citation>
    <scope>NUCLEOTIDE SEQUENCE [LARGE SCALE MRNA] (ISOFORM 3)</scope>
    <scope>NUCLEOTIDE SEQUENCE [LARGE SCALE MRNA] OF 3733-4753 (ISOFORM 1)</scope>
    <source>
        <tissue>Spleen</tissue>
        <tissue>Testis</tissue>
    </source>
</reference>
<reference key="2">
    <citation type="journal article" date="2004" name="Genome Res.">
        <title>The status, quality, and expansion of the NIH full-length cDNA project: the Mammalian Gene Collection (MGC).</title>
        <authorList>
            <consortium name="The MGC Project Team"/>
        </authorList>
    </citation>
    <scope>NUCLEOTIDE SEQUENCE [LARGE SCALE MRNA] (ISOFORM 2)</scope>
    <scope>NUCLEOTIDE SEQUENCE [LARGE SCALE MRNA] OF 3699-4753 (ISOFORM 1)</scope>
    <source>
        <tissue>Colon</tissue>
    </source>
</reference>
<reference key="3">
    <citation type="journal article" date="2006" name="Nature">
        <title>Human chromosome 11 DNA sequence and analysis including novel gene identification.</title>
        <authorList>
            <person name="Taylor T.D."/>
            <person name="Noguchi H."/>
            <person name="Totoki Y."/>
            <person name="Toyoda A."/>
            <person name="Kuroki Y."/>
            <person name="Dewar K."/>
            <person name="Lloyd C."/>
            <person name="Itoh T."/>
            <person name="Takeda T."/>
            <person name="Kim D.-W."/>
            <person name="She X."/>
            <person name="Barlow K.F."/>
            <person name="Bloom T."/>
            <person name="Bruford E."/>
            <person name="Chang J.L."/>
            <person name="Cuomo C.A."/>
            <person name="Eichler E."/>
            <person name="FitzGerald M.G."/>
            <person name="Jaffe D.B."/>
            <person name="LaButti K."/>
            <person name="Nicol R."/>
            <person name="Park H.-S."/>
            <person name="Seaman C."/>
            <person name="Sougnez C."/>
            <person name="Yang X."/>
            <person name="Zimmer A.R."/>
            <person name="Zody M.C."/>
            <person name="Birren B.W."/>
            <person name="Nusbaum C."/>
            <person name="Fujiyama A."/>
            <person name="Hattori M."/>
            <person name="Rogers J."/>
            <person name="Lander E.S."/>
            <person name="Sakaki Y."/>
        </authorList>
    </citation>
    <scope>NUCLEOTIDE SEQUENCE [LARGE SCALE GENOMIC DNA]</scope>
</reference>
<reference key="4">
    <citation type="submission" date="2005-07" db="EMBL/GenBank/DDBJ databases">
        <authorList>
            <person name="Mural R.J."/>
            <person name="Istrail S."/>
            <person name="Sutton G.G."/>
            <person name="Florea L."/>
            <person name="Halpern A.L."/>
            <person name="Mobarry C.M."/>
            <person name="Lippert R."/>
            <person name="Walenz B."/>
            <person name="Shatkay H."/>
            <person name="Dew I."/>
            <person name="Miller J.R."/>
            <person name="Flanigan M.J."/>
            <person name="Edwards N.J."/>
            <person name="Bolanos R."/>
            <person name="Fasulo D."/>
            <person name="Halldorsson B.V."/>
            <person name="Hannenhalli S."/>
            <person name="Turner R."/>
            <person name="Yooseph S."/>
            <person name="Lu F."/>
            <person name="Nusskern D.R."/>
            <person name="Shue B.C."/>
            <person name="Zheng X.H."/>
            <person name="Zhong F."/>
            <person name="Delcher A.L."/>
            <person name="Huson D.H."/>
            <person name="Kravitz S.A."/>
            <person name="Mouchard L."/>
            <person name="Reinert K."/>
            <person name="Remington K.A."/>
            <person name="Clark A.G."/>
            <person name="Waterman M.S."/>
            <person name="Eichler E.E."/>
            <person name="Adams M.D."/>
            <person name="Hunkapiller M.W."/>
            <person name="Myers E.W."/>
            <person name="Venter J.C."/>
        </authorList>
    </citation>
    <scope>NUCLEOTIDE SEQUENCE [LARGE SCALE GENOMIC DNA]</scope>
</reference>
<reference key="5">
    <citation type="journal article" date="2003" name="DNA Res.">
        <title>Characterization of long cDNA clones from human adult spleen. II. The complete sequences of 81 cDNA clones.</title>
        <authorList>
            <person name="Jikuya H."/>
            <person name="Takano J."/>
            <person name="Kikuno R."/>
            <person name="Hirosawa M."/>
            <person name="Nagase T."/>
            <person name="Nomura N."/>
            <person name="Ohara O."/>
        </authorList>
    </citation>
    <scope>NUCLEOTIDE SEQUENCE [LARGE SCALE MRNA] OF 1312-2302 (ISOFORM 1)</scope>
    <source>
        <tissue>Spleen</tissue>
    </source>
</reference>
<reference key="6">
    <citation type="journal article" date="2007" name="BMC Genomics">
        <title>The full-ORF clone resource of the German cDNA consortium.</title>
        <authorList>
            <person name="Bechtel S."/>
            <person name="Rosenfelder H."/>
            <person name="Duda A."/>
            <person name="Schmidt C.P."/>
            <person name="Ernst U."/>
            <person name="Wellenreuther R."/>
            <person name="Mehrle A."/>
            <person name="Schuster C."/>
            <person name="Bahr A."/>
            <person name="Bloecker H."/>
            <person name="Heubner D."/>
            <person name="Hoerlein A."/>
            <person name="Michel G."/>
            <person name="Wedler H."/>
            <person name="Koehrer K."/>
            <person name="Ottenwaelder B."/>
            <person name="Poustka A."/>
            <person name="Wiemann S."/>
            <person name="Schupp I."/>
        </authorList>
    </citation>
    <scope>NUCLEOTIDE SEQUENCE [LARGE SCALE MRNA] OF 1702-2302 (ISOFORM 1)</scope>
    <source>
        <tissue>Testis</tissue>
    </source>
</reference>
<reference key="7">
    <citation type="journal article" date="2003" name="Genome Res.">
        <title>The secreted protein discovery initiative (SPDI), a large-scale effort to identify novel human secreted and transmembrane proteins: a bioinformatics assessment.</title>
        <authorList>
            <person name="Clark H.F."/>
            <person name="Gurney A.L."/>
            <person name="Abaya E."/>
            <person name="Baker K."/>
            <person name="Baldwin D.T."/>
            <person name="Brush J."/>
            <person name="Chen J."/>
            <person name="Chow B."/>
            <person name="Chui C."/>
            <person name="Crowley C."/>
            <person name="Currell B."/>
            <person name="Deuel B."/>
            <person name="Dowd P."/>
            <person name="Eaton D."/>
            <person name="Foster J.S."/>
            <person name="Grimaldi C."/>
            <person name="Gu Q."/>
            <person name="Hass P.E."/>
            <person name="Heldens S."/>
            <person name="Huang A."/>
            <person name="Kim H.S."/>
            <person name="Klimowski L."/>
            <person name="Jin Y."/>
            <person name="Johnson S."/>
            <person name="Lee J."/>
            <person name="Lewis L."/>
            <person name="Liao D."/>
            <person name="Mark M.R."/>
            <person name="Robbie E."/>
            <person name="Sanchez C."/>
            <person name="Schoenfeld J."/>
            <person name="Seshagiri S."/>
            <person name="Simmons L."/>
            <person name="Singh J."/>
            <person name="Smith V."/>
            <person name="Stinson J."/>
            <person name="Vagts A."/>
            <person name="Vandlen R.L."/>
            <person name="Watanabe C."/>
            <person name="Wieand D."/>
            <person name="Woods K."/>
            <person name="Xie M.-H."/>
            <person name="Yansura D.G."/>
            <person name="Yi S."/>
            <person name="Yu G."/>
            <person name="Yuan J."/>
            <person name="Zhang M."/>
            <person name="Zhang Z."/>
            <person name="Goddard A.D."/>
            <person name="Wood W.I."/>
            <person name="Godowski P.J."/>
            <person name="Gray A.M."/>
        </authorList>
    </citation>
    <scope>NUCLEOTIDE SEQUENCE [LARGE SCALE MRNA] OF 4175-4753 (ISOFORM 1)</scope>
</reference>
<reference key="8">
    <citation type="journal article" date="2022" name="Am. J. Hum. Genet.">
        <title>Bi-allelic variants in DNHD1 cause flagellar axoneme defects and asthenoteratozoospermia in humans and mice.</title>
        <authorList>
            <person name="Tan C."/>
            <person name="Meng L."/>
            <person name="Lv M."/>
            <person name="He X."/>
            <person name="Sha Y."/>
            <person name="Tang D."/>
            <person name="Tan Y."/>
            <person name="Hu T."/>
            <person name="He W."/>
            <person name="Tu C."/>
            <person name="Nie H."/>
            <person name="Zhang H."/>
            <person name="Du J."/>
            <person name="Lu G."/>
            <person name="Fan L.Q."/>
            <person name="Cao Y."/>
            <person name="Lin G."/>
            <person name="Tan Y.Q."/>
        </authorList>
    </citation>
    <scope>INVOLVEMENT IN SPGF65</scope>
    <scope>FUNCTION</scope>
    <scope>SUBCELLULAR LOCATION</scope>
    <scope>TISSUE SPECIFICITY</scope>
    <scope>VARIANTS SPGF65 GLN-304; CYS-1358; 1381-GLN--SER-4753 DEL; CYS-1854; 2166-TYR--SER-4753 DEL; 2928-ARG--SER-4753 DEL; CYS-2970; 3217-ARG--SER-4753 DEL; 4151-TRP--SER-4753 DEL; ARG-4158 AND ALA-4745</scope>
    <scope>CHARACTERIZATION OF VARIANTS SPGF65 GLN-304; CYS-1358; CYS-1854; 2166-TYR--SER-4753 DEL; 2928-ARG--SER-4753 DEL AND CYS-2970</scope>
</reference>
<gene>
    <name type="primary">DNHD1</name>
    <name type="synonym">C11orf47</name>
    <name evidence="6" type="synonym">CCDC35</name>
    <name type="synonym">DHCD1</name>
    <name type="synonym">DNHD1L</name>
    <name type="ORF">UNQ5781/PRO12970</name>
</gene>
<evidence type="ECO:0000255" key="1"/>
<evidence type="ECO:0000256" key="2">
    <source>
        <dbReference type="SAM" id="MobiDB-lite"/>
    </source>
</evidence>
<evidence type="ECO:0000269" key="3">
    <source>
    </source>
</evidence>
<evidence type="ECO:0000303" key="4">
    <source>
    </source>
</evidence>
<evidence type="ECO:0000303" key="5">
    <source>
    </source>
</evidence>
<evidence type="ECO:0000303" key="6">
    <source>
    </source>
</evidence>
<evidence type="ECO:0000305" key="7"/>
<evidence type="ECO:0000305" key="8">
    <source>
    </source>
</evidence>
<feature type="chain" id="PRO_0000311985" description="Dynein heavy chain domain-containing protein 1">
    <location>
        <begin position="1"/>
        <end position="4753"/>
    </location>
</feature>
<feature type="region of interest" description="Disordered" evidence="2">
    <location>
        <begin position="2688"/>
        <end position="2766"/>
    </location>
</feature>
<feature type="region of interest" description="Disordered" evidence="2">
    <location>
        <begin position="3580"/>
        <end position="3657"/>
    </location>
</feature>
<feature type="region of interest" description="Disordered" evidence="2">
    <location>
        <begin position="4669"/>
        <end position="4697"/>
    </location>
</feature>
<feature type="coiled-coil region" evidence="1">
    <location>
        <begin position="826"/>
        <end position="858"/>
    </location>
</feature>
<feature type="coiled-coil region" evidence="1">
    <location>
        <begin position="936"/>
        <end position="991"/>
    </location>
</feature>
<feature type="coiled-coil region" evidence="1">
    <location>
        <begin position="3125"/>
        <end position="3227"/>
    </location>
</feature>
<feature type="coiled-coil region" evidence="1">
    <location>
        <begin position="3590"/>
        <end position="3651"/>
    </location>
</feature>
<feature type="coiled-coil region" evidence="1">
    <location>
        <begin position="4431"/>
        <end position="4460"/>
    </location>
</feature>
<feature type="compositionally biased region" description="Acidic residues" evidence="2">
    <location>
        <begin position="2695"/>
        <end position="2712"/>
    </location>
</feature>
<feature type="compositionally biased region" description="Polar residues" evidence="2">
    <location>
        <begin position="2740"/>
        <end position="2751"/>
    </location>
</feature>
<feature type="compositionally biased region" description="Acidic residues" evidence="2">
    <location>
        <begin position="3602"/>
        <end position="3615"/>
    </location>
</feature>
<feature type="compositionally biased region" description="Basic and acidic residues" evidence="2">
    <location>
        <begin position="3616"/>
        <end position="3631"/>
    </location>
</feature>
<feature type="compositionally biased region" description="Acidic residues" evidence="2">
    <location>
        <begin position="3632"/>
        <end position="3641"/>
    </location>
</feature>
<feature type="splice variant" id="VSP_040682" description="In isoform 3." evidence="4">
    <location>
        <begin position="1"/>
        <end position="311"/>
    </location>
</feature>
<feature type="splice variant" id="VSP_040683" description="In isoform 2 and isoform 3." evidence="4 5">
    <original>V</original>
    <variation>F</variation>
    <location>
        <position position="597"/>
    </location>
</feature>
<feature type="splice variant" id="VSP_040684" description="In isoform 2 and isoform 3." evidence="4 5">
    <location>
        <begin position="598"/>
        <end position="4753"/>
    </location>
</feature>
<feature type="sequence variant" id="VAR_039308" description="In dbSNP:rs2555158.">
    <original>V</original>
    <variation>E</variation>
    <location>
        <position position="240"/>
    </location>
</feature>
<feature type="sequence variant" id="VAR_056829" description="In dbSNP:rs11605196.">
    <original>Q</original>
    <variation>P</variation>
    <location>
        <position position="279"/>
    </location>
</feature>
<feature type="sequence variant" id="VAR_086769" description="In SPGF65; low expression, if any, in sperm flagella; dbSNP:rs369544858." evidence="3">
    <original>R</original>
    <variation>Q</variation>
    <location>
        <position position="304"/>
    </location>
</feature>
<feature type="sequence variant" id="VAR_039309" description="In dbSNP:rs2555152.">
    <original>D</original>
    <variation>N</variation>
    <location>
        <position position="317"/>
    </location>
</feature>
<feature type="sequence variant" id="VAR_056830" description="In dbSNP:rs11040904.">
    <original>F</original>
    <variation>L</variation>
    <location>
        <position position="403"/>
    </location>
</feature>
<feature type="sequence variant" id="VAR_039310" description="In dbSNP:rs4758423.">
    <original>H</original>
    <variation>Y</variation>
    <location>
        <position position="418"/>
    </location>
</feature>
<feature type="sequence variant" id="VAR_039311" description="In dbSNP:rs11603869.">
    <original>Q</original>
    <variation>E</variation>
    <location>
        <position position="560"/>
    </location>
</feature>
<feature type="sequence variant" id="VAR_033353" description="In SPGF65; uncertain significance; low expression, if any, in sperm flagella; dbSNP:rs12574381." evidence="3">
    <original>R</original>
    <variation>C</variation>
    <location>
        <position position="1358"/>
    </location>
</feature>
<feature type="sequence variant" id="VAR_086770" description="In SPGF65." evidence="3">
    <location>
        <begin position="1381"/>
        <end position="4753"/>
    </location>
</feature>
<feature type="sequence variant" id="VAR_086771" description="In SPGF65; low expression, if any, in sperm flagella; dbSNP:rs1035842147." evidence="3">
    <original>R</original>
    <variation>C</variation>
    <location>
        <position position="1854"/>
    </location>
</feature>
<feature type="sequence variant" id="VAR_033354" description="In dbSNP:rs16915277.">
    <original>K</original>
    <variation>N</variation>
    <location>
        <position position="1896"/>
    </location>
</feature>
<feature type="sequence variant" id="VAR_033355" description="In dbSNP:rs11825154.">
    <original>F</original>
    <variation>L</variation>
    <location>
        <position position="2041"/>
    </location>
</feature>
<feature type="sequence variant" id="VAR_086772" description="In SPGF65; low expression, if any, in sperm flagella." evidence="3">
    <location>
        <begin position="2166"/>
        <end position="4753"/>
    </location>
</feature>
<feature type="sequence variant" id="VAR_086773" description="In SPGF65; low expression, if any, in sperm flagella; dbSNP:rs199752008." evidence="3">
    <location>
        <begin position="2928"/>
        <end position="4753"/>
    </location>
</feature>
<feature type="sequence variant" id="VAR_086774" description="In SPGF65; uncertain significance; low expression, if any, in sperm flagella; dbSNP:rs187626415." evidence="3">
    <original>Y</original>
    <variation>C</variation>
    <location>
        <position position="2970"/>
    </location>
</feature>
<feature type="sequence variant" id="VAR_086775" description="In SPGF65; dbSNP:rs764070280." evidence="3">
    <location>
        <begin position="3217"/>
        <end position="4753"/>
    </location>
</feature>
<feature type="sequence variant" id="VAR_037388" description="In dbSNP:rs10769699.">
    <original>R</original>
    <variation>H</variation>
    <location>
        <position position="3830"/>
    </location>
</feature>
<feature type="sequence variant" id="VAR_086776" description="In SPGF65." evidence="3">
    <location>
        <begin position="4151"/>
        <end position="4753"/>
    </location>
</feature>
<feature type="sequence variant" id="VAR_086777" description="In SPGF65; uncertain significance; dbSNP:rs2134462807." evidence="3">
    <original>H</original>
    <variation>R</variation>
    <location>
        <position position="4158"/>
    </location>
</feature>
<feature type="sequence variant" id="VAR_037389" description="In dbSNP:rs11604362.">
    <original>I</original>
    <variation>T</variation>
    <location>
        <position position="4666"/>
    </location>
</feature>
<feature type="sequence variant" id="VAR_086778" description="In SPGF65; uncertain significance; dbSNP:rs185616789." evidence="3">
    <original>V</original>
    <variation>A</variation>
    <location>
        <position position="4745"/>
    </location>
</feature>
<feature type="sequence conflict" description="In Ref. 5; BAB85004." evidence="7" ref="5">
    <original>V</original>
    <variation>P</variation>
    <location>
        <position position="1312"/>
    </location>
</feature>
<feature type="sequence conflict" description="In Ref. 5; BAB85004 and 6; CAB70845." evidence="7" ref="5 6">
    <original>A</original>
    <variation>AALLH</variation>
    <location>
        <position position="1909"/>
    </location>
</feature>
<accession>Q96M86</accession>
<accession>Q2NKK8</accession>
<accession>Q6UWI9</accession>
<accession>Q8NAA2</accession>
<accession>Q8TEE6</accession>
<accession>Q9NSZ9</accession>
<sequence>MVPEERRVGLSSDETSSDSLKSWHSICVLDSKEQPLACQQKQRQFVKPVTESEQPTVLELLLAELRTLFSAVLQDSSPAAWRYLHAVLGLLPPYRELLVGHLDLLPFLEQLYCWAPWVQTHLHLDLLGAIVQAFPPDSSLLDSASHADCCPQKRRLHHRPPCPACPFVQAQWSRQQVKEELATWLRPLTLPELQRCLGIVGAQVALEEAVWLDGLSLLPLALAADIPVRYESSDTDNAEVEPVGRKETRSQLDYEVPREKAFQKSSTGFSPETSFLDSQVMTALKMERYLKKIHFLYLNVAPSRYFRPYSLMVVPPDKVNPEHYIFSPFGILHVHPVEGSETMTLGTWHHHCVLWQQLQFIPFFKYCLLRKSFTCWKKNVRLQGLHRLQKFLENHLLLAVPHFGAGLLHISRLLQELHSVSWLPQELDRCYELLDLQTALAEEKHKALRLLHRCLNLCTSILRLVHEDTYHMQQCLQERVQNCDRIRTGQGSIYLQRVQHKQLEQKLKQAEAWWLQLGKFARLVDYMICQSLISVLEEQITSFVANILQAPRQKPFLSSQLVFDDHGQLSHVPCVENMIQTLTGGLQSVKTSALQVVQSADLKTSSDSLYSEEEDEEEDSKDEFLMPKFQGQPSDAVSIFCGPNVGLVWPWKSHPIAGILEVRGCRLRGQYFPHNYKQLEEDLDNNPKIQQALNIQQVLLEGVLCKVQEFCREHHWITGIYEFLQSWGPQKLEDMRGGPIKNYVTLVSRLNVWQARVSSMPIELLTKGGLLLLSCHDVQAEMESKLNSIRKDILAHVQNECWNLSQQLMTELTDFMHIFRTINSDIHAIAQCTQKLNEANEQYVELEERMEYVRALHELIRNHFSLFSAENEALDISVRRQFGESPIPPCPPPPQPHLLHCPLLAPQLLDMWEAFQFEKSQASEFLLSKRHAIMPKLQQLMAAALAELEGLLAKALSGPFMDPTQDQRSTEHQLVSLERQFQNTVSDLSELHHAYAIFTEDETPVPLPICGTRPIVQQQRIWHLYRVISENISEWKCMAFAKFSPAMAQEKTEGWLTEAARMSTTLELHSPVLQHCMRILGEFRSYLPLLTKLGSLHPQSLNCQCLLRALGLGSLQTIELLTLGQLLTYPLLEFADRINQVWQNENERIHAQETIRRLQRYWEARQLRLLNFILHVPYEPPASERSKRQVLRSPQWEVVDKDSGTFILSDYSNLQDSIQESLQVLSKILAIEKSGDLNKIALEWVAIMHGLGALLEVWLTFQQKWIFLNKVLHEMKIQFPNADLNSRFKVMDDQYRTLMRISVADPMVLSLVVPSAERSPYFQGQQLQQLLQAGSVELEGIIMSLESVLYGVCAHFPRLFFLSDSELVALLAARLESCEAQLWVRRCFPHVHAVSFRSCPTGEKNTDDWESSPNTQTQVEALAVLGAGGEEVKLQGPLPLHPDLPKWLASLEKCLRLALVHMLQGCVAARLARGPSLGEALKQLPKQNKLYLQLYVQHWIDLVQAFPWQCVLVAEEVVWRAEMEEALLEWGTLAMVSMHMRKLEVLVNFMRAQRASQGGQSLPSVRQTSLLSALLVMAVTHRDIAQLLEQHQVSDLTDFHWVRQLKYHLGSPHIIPKSPLQSLKTIASSEPSLSPAACWIDVLGRSFLYNYEYLGPRLGPLPSLLPERPALVLLLALEEVACGTVLGPNGVGKRAIVNSLAQALGRQLVMLPCSPQIEAQCLSNYLNGALQGGAWLLLEKVHQLPPGLLSALGQRLGELHHLYAPLYQEASRNTSTIDPTQPQLLGSSFFEKHHVSVRLGYGCLLVLRALSSAVPANLHLLLRPVALALPDLRQVAELTLLGAGMRDAFQMATRLSKFFSLERELVSGPLPCRLPLLKQILEDTIRTLNVTKEEPKCQKPRSLAAIEEAALLRSPLFSILNGLHLHNLRGLLCALFPSASQVLAEPMTYKLMKPLVVEELQQVGLDPSPDILGSLEQLSQALSRASGILLLGPAGSGKTTCWHSLFKIQNRLAAMEDTSTQGCQPVEITHLYPSGLSPQEFLGWLEGSCWHHGIFPKVLRAAGQCNNMGQKRQTEESIGIQHWIICDGASNGAWLDSITCLLSELPQLSLPSGQQIARPPGTFLLMEVADTTGISPTVVGCCALVWCGGEQTWQCILSALMASLPYEYRLQHRTVAELNHMAEVLVPATLRFLTCQGVSSLLQVHGQQAVCAGVAEVTSMARILHSLLDLHLRLKEEKAPGPEDLSYSDPVAQSFRSSKSSFLNRSQVDSDDVPDKCREHLLAVSSFLFALIWGFGAHLPSRFWPIFDTFIRDSISRLSNYPEPPPSALVFDLHVSPEDGTLVPFTGQYLSSHIKGTLGTFHPSIQTERLLYVVDLLLSGGQPVLLAGEAATGKSAFVEVLVEPHHPYIYSPIHPAFSSSHLRLLLSRGIQGQTQASPQPGHHQDSKPSLLFLLEDLHLATSDPEKSCQPVLETLRQAMDGTVYAHSTLELQTLQPTVNFLATVTVPGYCERPLCPRLFRLFTVLALESMTQATLLERHVPIIQAWLERFPSVERERALARGLVRASVEAWEAVCNCFMPSPLHPHYHFSLHSVSHLLSSLQLLPNRTGSRGFVDYPNHQEHLRRVSGLRGTCLTVMMATRNVVRLWLHEAQRTFCDRLDSPRERSYCAKLLLVVAQSVFCCGPGPQHLGKDHQESEEEEEEERVPEVESEGELAQWEDFSNSNSETEEEEEPYGLQVARVSNSRDPSLTPSIGPVSRGMKESISHKIRQEKGTRASNYRLQVRRSFKTWWQKKPQMDLISPLLLPVLLLHPQEKPSDLVFSQELILGPNSETPNLYLERQWEKLEEQLATSAAQLKLSPHLARCHSMAQHVARLVRVLARPRQHGLLLSGALGTGRHTAITLASSICQAHFFHLPSGSEEAILQCLRDASWHAGMLSQPVALLVPSGVDLTTLHRLLALATSGSFPGQYTEADLDRIGEHLPRENLGVKQNIKKEMVLQRFHQQVCSHLHLFFLIGDKQAHKQLPSTLFLRLLQLATASIDRYEPWDQAALAKVAQHHLEGAQSVPLDDGSWKYPDLQASIPSVAKAMALIHLSATHYHEHLCPALPLVTPKTFLDFLDTFLMLQQQTILKIKNKAQRVQNALENLRMLIKEHGTHANLIFDLEQQLKDSGKSLSMFQQQLEQSKLLYKQQLEECRHQENLIENLARQRDALQAQREAFLEQMSKAFLEPLSQLQVADFEEIRSYRAPPESVVRVTDAMCDLFHHETGWASAKQLLCTEDFYQELVFFPKEKITDSELIKLHLILKAPGMDDAALRAVSRPAASLAAWLWAVLHYGLAHCRGLPTDLLLQQVEATLTREQARLGYYQFQAQETLEHNLALAKMVEDAQASHNCVAKTLSQAQCGQYHKWPMKAALLTPMRAWTTQLQKLKGRCMTVFGDTLLCSAAIIYLGPFPPLRRQELLDEWLALCRGFQEALGPDDVAQALKRKQKSVSIPPKNPLLATHSPFSILSLLSSESEQYQWDGNLKPQAKSAHLAGLLLRSPTHYSSCRWPLLLDPSNEALIWLDPLPLEENRSFAPALTEGRGKGLMRNQKRESKTDMKEEDDESEESNEAEDQTKEQKAEERKNEQEKEQEENEEKEEEKTESQGSKPAYETQLPSLPYLSVLSGADPELGSQLQEAAACGLPVLLTNVELGLGCEELQWLLQREQLSPPQVQPGFCLYLSTTLSLCAMEKVLGCELLKGLNVLDLGLNMEILEEQMLHEILCREYPELETRWQDLKIRALDTCKAVEAAEERLLTMLLFQNPKRQKPAKFLRNIVRAQGKLCQLRAHCEELEGQKLQEMVLWAPYRPVVWHGMAMVKALSQLQNLLPLFCMSPENWLAVTKQALDSMKPREINHGEDLASHLLQLRAHLTRQLLGSTVTALGLTQVPLVGALGALALLQATGKASELERLALWPGLAASPSTVHSKPVSDVARPAWLGPKAWHECEMLELLPPFVGLCASLAGHSSAWQAYLSLSSTVLGPAPGPGPEPLSLLQKLILWRVLRPECLAGALADFTTSLLGRPLDENTYAPTMPFKHSQATQPMLILLPPPGHPSATLHPLTVIQKLAAKYQQGQKQLQVIALGSEAWDPVSVVVSTLSQAMYEGHWLVLDNCHLMPHWPKELLQLLLELLGRAKVVADLESEQLLDQPESRNVSTVHRDFRLWLIVPAESSASLPAVLTQHSMPVFWNQSLELGHVLIDSVELAQQVLYMQPPTQALPLLLLHGLLLHRQLYGTRLQAHRGRWSQVTLTQVLQTQDQLWASLSNPRAAMQELAASVFYGGPLGDTEDREALISLTQACLSPSSGSWVQPHTPQSLLATLMPLPELRELDAMAECKAQMHLLPSPPEPRLCGLSEGPQAWLLRRQSRALLSALQRSSPVWVPESRRGAQLAERRLRQRLVQVNRRLESLQDLLTHVIRQDESDAPWSVLGPNARRPLEGVLETEALELSQLVGTLQRDLDCLLQQLKGAPPCPSRRCAAVAHALWTGRLPLPWRPHAPAGPQPPWHWLRQLSRRGQLLVRYLGVGADASSDVPERVFHLSAFRHPRRLLLALRGEAALDQNVPSSNFPGSRGSVSSQLQYKRLEMNSNPLHFRVENGPNPTVPERGLLLIGLQVLHAEWDPIAGALQDSPSSQPSPLPPVSISTQAPGTSDLPAPADLTVYSCPVYMGGPLGTAKLQSRNIVMHLPLPTKLTPNTCVQRRVHVCSPPLS</sequence>
<keyword id="KW-0025">Alternative splicing</keyword>
<keyword id="KW-0966">Cell projection</keyword>
<keyword id="KW-0969">Cilium</keyword>
<keyword id="KW-0175">Coiled coil</keyword>
<keyword id="KW-0217">Developmental protein</keyword>
<keyword id="KW-0225">Disease variant</keyword>
<keyword id="KW-0282">Flagellum</keyword>
<keyword id="KW-1267">Proteomics identification</keyword>
<keyword id="KW-1185">Reference proteome</keyword>
<proteinExistence type="evidence at protein level"/>
<dbReference type="EMBL" id="AK057314">
    <property type="protein sequence ID" value="BAB71423.1"/>
    <property type="molecule type" value="mRNA"/>
</dbReference>
<dbReference type="EMBL" id="AK093028">
    <property type="protein sequence ID" value="BAC04023.1"/>
    <property type="molecule type" value="mRNA"/>
</dbReference>
<dbReference type="EMBL" id="BC111765">
    <property type="protein sequence ID" value="AAI11766.1"/>
    <property type="molecule type" value="mRNA"/>
</dbReference>
<dbReference type="EMBL" id="BC117301">
    <property type="protein sequence ID" value="AAI17302.1"/>
    <property type="molecule type" value="mRNA"/>
</dbReference>
<dbReference type="EMBL" id="BC117303">
    <property type="protein sequence ID" value="AAI17304.1"/>
    <property type="molecule type" value="mRNA"/>
</dbReference>
<dbReference type="EMBL" id="AC009796">
    <property type="status" value="NOT_ANNOTATED_CDS"/>
    <property type="molecule type" value="Genomic_DNA"/>
</dbReference>
<dbReference type="EMBL" id="AC084337">
    <property type="status" value="NOT_ANNOTATED_CDS"/>
    <property type="molecule type" value="Genomic_DNA"/>
</dbReference>
<dbReference type="EMBL" id="CH471064">
    <property type="protein sequence ID" value="EAW68692.1"/>
    <property type="status" value="ALT_SEQ"/>
    <property type="molecule type" value="Genomic_DNA"/>
</dbReference>
<dbReference type="EMBL" id="CH471064">
    <property type="protein sequence ID" value="EAW68702.1"/>
    <property type="molecule type" value="Genomic_DNA"/>
</dbReference>
<dbReference type="EMBL" id="AK074178">
    <property type="protein sequence ID" value="BAB85004.1"/>
    <property type="status" value="ALT_SEQ"/>
    <property type="molecule type" value="mRNA"/>
</dbReference>
<dbReference type="EMBL" id="AL137619">
    <property type="protein sequence ID" value="CAB70845.1"/>
    <property type="status" value="ALT_SEQ"/>
    <property type="molecule type" value="mRNA"/>
</dbReference>
<dbReference type="EMBL" id="AY358770">
    <property type="protein sequence ID" value="AAQ89130.1"/>
    <property type="status" value="ALT_FRAME"/>
    <property type="molecule type" value="mRNA"/>
</dbReference>
<dbReference type="CCDS" id="CCDS44532.1">
    <molecule id="Q96M86-3"/>
</dbReference>
<dbReference type="CCDS" id="CCDS7767.1">
    <molecule id="Q96M86-4"/>
</dbReference>
<dbReference type="PIR" id="T46462">
    <property type="entry name" value="T46462"/>
</dbReference>
<dbReference type="RefSeq" id="NP_653267.2">
    <molecule id="Q96M86-3"/>
    <property type="nucleotide sequence ID" value="NM_144666.3"/>
</dbReference>
<dbReference type="RefSeq" id="NP_775860.3">
    <molecule id="Q96M86-4"/>
    <property type="nucleotide sequence ID" value="NM_173589.3"/>
</dbReference>
<dbReference type="SMR" id="Q96M86"/>
<dbReference type="BioGRID" id="126834">
    <property type="interactions" value="18"/>
</dbReference>
<dbReference type="FunCoup" id="Q96M86">
    <property type="interactions" value="57"/>
</dbReference>
<dbReference type="IntAct" id="Q96M86">
    <property type="interactions" value="8"/>
</dbReference>
<dbReference type="MINT" id="Q96M86"/>
<dbReference type="STRING" id="9606.ENSP00000254579"/>
<dbReference type="GlyGen" id="Q96M86">
    <property type="glycosylation" value="5 sites, 1 O-linked glycan (3 sites)"/>
</dbReference>
<dbReference type="iPTMnet" id="Q96M86"/>
<dbReference type="PhosphoSitePlus" id="Q96M86"/>
<dbReference type="BioMuta" id="DNHD1"/>
<dbReference type="DMDM" id="300669633"/>
<dbReference type="jPOST" id="Q96M86"/>
<dbReference type="MassIVE" id="Q96M86"/>
<dbReference type="PaxDb" id="9606-ENSP00000254579"/>
<dbReference type="PeptideAtlas" id="Q96M86"/>
<dbReference type="ProteomicsDB" id="77309">
    <molecule id="Q96M86-3"/>
</dbReference>
<dbReference type="ProteomicsDB" id="77310">
    <molecule id="Q96M86-4"/>
</dbReference>
<dbReference type="Antibodypedia" id="48761">
    <property type="antibodies" value="18 antibodies from 7 providers"/>
</dbReference>
<dbReference type="DNASU" id="144132"/>
<dbReference type="Ensembl" id="ENST00000254579.11">
    <molecule id="Q96M86-3"/>
    <property type="protein sequence ID" value="ENSP00000254579.6"/>
    <property type="gene ID" value="ENSG00000179532.13"/>
</dbReference>
<dbReference type="Ensembl" id="ENST00000354685.7">
    <molecule id="Q96M86-4"/>
    <property type="protein sequence ID" value="ENSP00000346716.3"/>
    <property type="gene ID" value="ENSG00000179532.13"/>
</dbReference>
<dbReference type="GeneID" id="144132"/>
<dbReference type="KEGG" id="hsa:144132"/>
<dbReference type="MANE-Select" id="ENST00000254579.11">
    <property type="protein sequence ID" value="ENSP00000254579.6"/>
    <property type="RefSeq nucleotide sequence ID" value="NM_144666.3"/>
    <property type="RefSeq protein sequence ID" value="NP_653267.2"/>
</dbReference>
<dbReference type="UCSC" id="uc001mdp.4">
    <molecule id="Q96M86-3"/>
    <property type="organism name" value="human"/>
</dbReference>
<dbReference type="AGR" id="HGNC:26532"/>
<dbReference type="CTD" id="144132"/>
<dbReference type="DisGeNET" id="144132"/>
<dbReference type="GeneCards" id="DNHD1"/>
<dbReference type="HGNC" id="HGNC:26532">
    <property type="gene designation" value="DNHD1"/>
</dbReference>
<dbReference type="HPA" id="ENSG00000179532">
    <property type="expression patterns" value="Tissue enhanced (testis)"/>
</dbReference>
<dbReference type="MalaCards" id="DNHD1"/>
<dbReference type="MIM" id="617277">
    <property type="type" value="gene"/>
</dbReference>
<dbReference type="MIM" id="619712">
    <property type="type" value="phenotype"/>
</dbReference>
<dbReference type="neXtProt" id="NX_Q96M86"/>
<dbReference type="OpenTargets" id="ENSG00000179532"/>
<dbReference type="Orphanet" id="137893">
    <property type="disease" value="Male infertility due to large-headed multiflagellar polyploid spermatozoa"/>
</dbReference>
<dbReference type="Orphanet" id="399805">
    <property type="disease" value="Male infertility with azoospermia or oligozoospermia due to single gene mutation"/>
</dbReference>
<dbReference type="PharmGKB" id="PA142671968"/>
<dbReference type="VEuPathDB" id="HostDB:ENSG00000179532"/>
<dbReference type="eggNOG" id="KOG3595">
    <property type="taxonomic scope" value="Eukaryota"/>
</dbReference>
<dbReference type="GeneTree" id="ENSGT00940000155523"/>
<dbReference type="HOGENOM" id="CLU_000038_0_3_1"/>
<dbReference type="InParanoid" id="Q96M86"/>
<dbReference type="OMA" id="SRNIVMH"/>
<dbReference type="OrthoDB" id="5986589at2759"/>
<dbReference type="PAN-GO" id="Q96M86">
    <property type="GO annotations" value="5 GO annotations based on evolutionary models"/>
</dbReference>
<dbReference type="PhylomeDB" id="Q96M86"/>
<dbReference type="TreeFam" id="TF337443"/>
<dbReference type="PathwayCommons" id="Q96M86"/>
<dbReference type="SignaLink" id="Q96M86"/>
<dbReference type="BioGRID-ORCS" id="144132">
    <property type="hits" value="9 hits in 1156 CRISPR screens"/>
</dbReference>
<dbReference type="ChiTaRS" id="DNHD1">
    <property type="organism name" value="human"/>
</dbReference>
<dbReference type="GenomeRNAi" id="144132"/>
<dbReference type="Pharos" id="Q96M86">
    <property type="development level" value="Tdark"/>
</dbReference>
<dbReference type="PRO" id="PR:Q96M86"/>
<dbReference type="Proteomes" id="UP000005640">
    <property type="component" value="Chromosome 11"/>
</dbReference>
<dbReference type="RNAct" id="Q96M86">
    <property type="molecule type" value="protein"/>
</dbReference>
<dbReference type="Bgee" id="ENSG00000179532">
    <property type="expression patterns" value="Expressed in right testis and 113 other cell types or tissues"/>
</dbReference>
<dbReference type="ExpressionAtlas" id="Q96M86">
    <property type="expression patterns" value="baseline and differential"/>
</dbReference>
<dbReference type="GO" id="GO:0070062">
    <property type="term" value="C:extracellular exosome"/>
    <property type="evidence" value="ECO:0007005"/>
    <property type="project" value="UniProtKB"/>
</dbReference>
<dbReference type="GO" id="GO:0036156">
    <property type="term" value="C:inner dynein arm"/>
    <property type="evidence" value="ECO:0000318"/>
    <property type="project" value="GO_Central"/>
</dbReference>
<dbReference type="GO" id="GO:0036126">
    <property type="term" value="C:sperm flagellum"/>
    <property type="evidence" value="ECO:0000314"/>
    <property type="project" value="UniProtKB"/>
</dbReference>
<dbReference type="GO" id="GO:0005524">
    <property type="term" value="F:ATP binding"/>
    <property type="evidence" value="ECO:0007669"/>
    <property type="project" value="InterPro"/>
</dbReference>
<dbReference type="GO" id="GO:0045505">
    <property type="term" value="F:dynein intermediate chain binding"/>
    <property type="evidence" value="ECO:0000318"/>
    <property type="project" value="GO_Central"/>
</dbReference>
<dbReference type="GO" id="GO:0051959">
    <property type="term" value="F:dynein light intermediate chain binding"/>
    <property type="evidence" value="ECO:0000318"/>
    <property type="project" value="GO_Central"/>
</dbReference>
<dbReference type="GO" id="GO:0008569">
    <property type="term" value="F:minus-end-directed microtubule motor activity"/>
    <property type="evidence" value="ECO:0000318"/>
    <property type="project" value="GO_Central"/>
</dbReference>
<dbReference type="GO" id="GO:0030317">
    <property type="term" value="P:flagellated sperm motility"/>
    <property type="evidence" value="ECO:0000315"/>
    <property type="project" value="UniProtKB"/>
</dbReference>
<dbReference type="GO" id="GO:0120316">
    <property type="term" value="P:sperm flagellum assembly"/>
    <property type="evidence" value="ECO:0000315"/>
    <property type="project" value="UniProtKB"/>
</dbReference>
<dbReference type="FunFam" id="1.20.140.100:FF:000008">
    <property type="entry name" value="Dynein heavy chain domain 1"/>
    <property type="match status" value="1"/>
</dbReference>
<dbReference type="FunFam" id="1.20.58.1120:FF:000010">
    <property type="entry name" value="Dynein heavy chain domain 1"/>
    <property type="match status" value="1"/>
</dbReference>
<dbReference type="FunFam" id="1.20.920.20:FF:000011">
    <property type="entry name" value="Dynein heavy chain domain 1"/>
    <property type="match status" value="1"/>
</dbReference>
<dbReference type="FunFam" id="1.20.920.30:FF:000008">
    <property type="entry name" value="Dynein heavy chain domain 1"/>
    <property type="match status" value="1"/>
</dbReference>
<dbReference type="FunFam" id="3.20.180.20:FF:000007">
    <property type="entry name" value="Dynein heavy chain domain 1"/>
    <property type="match status" value="1"/>
</dbReference>
<dbReference type="FunFam" id="3.40.50.300:FF:001411">
    <property type="entry name" value="Dynein heavy chain domain 1"/>
    <property type="match status" value="1"/>
</dbReference>
<dbReference type="FunFam" id="3.40.50.300:FF:001476">
    <property type="entry name" value="Dynein heavy chain domain 1"/>
    <property type="match status" value="1"/>
</dbReference>
<dbReference type="FunFam" id="3.40.50.300:FF:001491">
    <property type="entry name" value="Dynein heavy chain domain 1"/>
    <property type="match status" value="1"/>
</dbReference>
<dbReference type="FunFam" id="3.40.50.300:FF:001540">
    <property type="entry name" value="Dynein heavy chain domain 1"/>
    <property type="match status" value="1"/>
</dbReference>
<dbReference type="FunFam" id="3.40.50.300:FF:001566">
    <property type="entry name" value="Dynein heavy chain domain 1"/>
    <property type="match status" value="1"/>
</dbReference>
<dbReference type="FunFam" id="3.40.50.300:FF:001336">
    <property type="entry name" value="Dynein heavy chain domain-containing protein 1"/>
    <property type="match status" value="1"/>
</dbReference>
<dbReference type="Gene3D" id="1.20.58.1120">
    <property type="match status" value="1"/>
</dbReference>
<dbReference type="Gene3D" id="1.20.920.20">
    <property type="match status" value="1"/>
</dbReference>
<dbReference type="Gene3D" id="1.20.920.30">
    <property type="match status" value="1"/>
</dbReference>
<dbReference type="Gene3D" id="1.20.140.100">
    <property type="entry name" value="Dynein heavy chain, N-terminal domain 2"/>
    <property type="match status" value="1"/>
</dbReference>
<dbReference type="Gene3D" id="3.20.180.20">
    <property type="entry name" value="Dynein heavy chain, N-terminal domain 2"/>
    <property type="match status" value="1"/>
</dbReference>
<dbReference type="Gene3D" id="3.40.50.300">
    <property type="entry name" value="P-loop containing nucleotide triphosphate hydrolases"/>
    <property type="match status" value="6"/>
</dbReference>
<dbReference type="InterPro" id="IPR035699">
    <property type="entry name" value="AAA_6"/>
</dbReference>
<dbReference type="InterPro" id="IPR026983">
    <property type="entry name" value="DHC"/>
</dbReference>
<dbReference type="InterPro" id="IPR042222">
    <property type="entry name" value="Dynein_2_N"/>
</dbReference>
<dbReference type="InterPro" id="IPR041466">
    <property type="entry name" value="Dynein_AAA5_ext"/>
</dbReference>
<dbReference type="InterPro" id="IPR041228">
    <property type="entry name" value="Dynein_C"/>
</dbReference>
<dbReference type="InterPro" id="IPR024743">
    <property type="entry name" value="Dynein_HC_stalk"/>
</dbReference>
<dbReference type="InterPro" id="IPR024317">
    <property type="entry name" value="Dynein_heavy_chain_D4_dom"/>
</dbReference>
<dbReference type="InterPro" id="IPR004273">
    <property type="entry name" value="Dynein_heavy_D6_P-loop"/>
</dbReference>
<dbReference type="InterPro" id="IPR013602">
    <property type="entry name" value="Dynein_heavy_linker"/>
</dbReference>
<dbReference type="InterPro" id="IPR042228">
    <property type="entry name" value="Dynein_linker_3"/>
</dbReference>
<dbReference type="InterPro" id="IPR027417">
    <property type="entry name" value="P-loop_NTPase"/>
</dbReference>
<dbReference type="PANTHER" id="PTHR10676:SF359">
    <property type="entry name" value="DYNEIN HEAVY CHAIN DOMAIN-CONTAINING PROTEIN 1"/>
    <property type="match status" value="1"/>
</dbReference>
<dbReference type="PANTHER" id="PTHR10676">
    <property type="entry name" value="DYNEIN HEAVY CHAIN FAMILY PROTEIN"/>
    <property type="match status" value="1"/>
</dbReference>
<dbReference type="Pfam" id="PF12774">
    <property type="entry name" value="AAA_6"/>
    <property type="match status" value="1"/>
</dbReference>
<dbReference type="Pfam" id="PF12775">
    <property type="entry name" value="AAA_7"/>
    <property type="match status" value="1"/>
</dbReference>
<dbReference type="Pfam" id="PF12780">
    <property type="entry name" value="AAA_8"/>
    <property type="match status" value="1"/>
</dbReference>
<dbReference type="Pfam" id="PF08393">
    <property type="entry name" value="DHC_N2"/>
    <property type="match status" value="1"/>
</dbReference>
<dbReference type="Pfam" id="PF17852">
    <property type="entry name" value="Dynein_AAA_lid"/>
    <property type="match status" value="1"/>
</dbReference>
<dbReference type="Pfam" id="PF18199">
    <property type="entry name" value="Dynein_C"/>
    <property type="match status" value="1"/>
</dbReference>
<dbReference type="Pfam" id="PF03028">
    <property type="entry name" value="Dynein_heavy"/>
    <property type="match status" value="1"/>
</dbReference>
<dbReference type="Pfam" id="PF12777">
    <property type="entry name" value="MT"/>
    <property type="match status" value="1"/>
</dbReference>
<dbReference type="SUPFAM" id="SSF52540">
    <property type="entry name" value="P-loop containing nucleoside triphosphate hydrolases"/>
    <property type="match status" value="3"/>
</dbReference>
<comment type="function">
    <text evidence="8">Essential for the normal assembly and function of sperm flagella axonemes.</text>
</comment>
<comment type="subcellular location">
    <subcellularLocation>
        <location evidence="3">Cell projection</location>
        <location evidence="3">Cilium</location>
        <location evidence="3">Flagellum</location>
    </subcellularLocation>
    <text evidence="3">Predominantly concentrated in the mid-piece of the sperm flagella.</text>
</comment>
<comment type="alternative products">
    <event type="alternative splicing"/>
    <isoform>
        <id>Q96M86-3</id>
        <name>1</name>
        <sequence type="displayed"/>
    </isoform>
    <isoform>
        <id>Q96M86-4</id>
        <name>2</name>
        <sequence type="described" ref="VSP_040683 VSP_040684"/>
    </isoform>
    <isoform>
        <id>Q96M86-5</id>
        <name>3</name>
        <sequence type="described" ref="VSP_040682 VSP_040683 VSP_040684"/>
    </isoform>
</comment>
<comment type="tissue specificity">
    <text evidence="3">Expressed in spermatozoa (at protein level).</text>
</comment>
<comment type="disease" evidence="3">
    <disease id="DI-06307">
        <name>Spermatogenic failure 65</name>
        <acronym>SPGF65</acronym>
        <description>An autosomal recessive male infertility disorder characterized by asthenoteratozoospermia. Progressive sperm motility is severely reduced or absent due to multiple morphologic abnormalities of the flagella.</description>
        <dbReference type="MIM" id="619712"/>
    </disease>
    <text>The disease is caused by variants affecting the gene represented in this entry.</text>
</comment>
<comment type="similarity">
    <text evidence="7">Belongs to the dynein heavy chain family.</text>
</comment>
<comment type="sequence caution" evidence="7">
    <conflict type="frameshift">
        <sequence resource="EMBL-CDS" id="AAQ89130"/>
    </conflict>
</comment>
<comment type="sequence caution" evidence="7">
    <conflict type="miscellaneous discrepancy">
        <sequence resource="EMBL-CDS" id="BAB85004"/>
    </conflict>
    <text>Intron retention.</text>
</comment>
<comment type="sequence caution" evidence="7">
    <conflict type="miscellaneous discrepancy">
        <sequence resource="EMBL-CDS" id="CAB70845"/>
    </conflict>
    <text>Intron retention.</text>
</comment>
<comment type="sequence caution" evidence="7">
    <conflict type="erroneous gene model prediction">
        <sequence resource="EMBL-CDS" id="EAW68692"/>
    </conflict>
</comment>